<evidence type="ECO:0000255" key="1">
    <source>
        <dbReference type="HAMAP-Rule" id="MF_00454"/>
    </source>
</evidence>
<evidence type="ECO:0000305" key="2"/>
<sequence>MLVPLHFLAVGVGAAAGAWLRWLLGLKFNVSGWPWGTLAANLGGGYLIGLILGLITLHPEWPAWVRLALVTGFLGGLTTFSTFSAEVVQYLERGQFGHAAGYAVVSLAGSLCLTALGLATAHLMGR</sequence>
<keyword id="KW-0997">Cell inner membrane</keyword>
<keyword id="KW-1003">Cell membrane</keyword>
<keyword id="KW-0407">Ion channel</keyword>
<keyword id="KW-0406">Ion transport</keyword>
<keyword id="KW-0472">Membrane</keyword>
<keyword id="KW-0479">Metal-binding</keyword>
<keyword id="KW-1185">Reference proteome</keyword>
<keyword id="KW-0915">Sodium</keyword>
<keyword id="KW-0812">Transmembrane</keyword>
<keyword id="KW-1133">Transmembrane helix</keyword>
<keyword id="KW-0813">Transport</keyword>
<organism>
    <name type="scientific">Bordetella avium (strain 197N)</name>
    <dbReference type="NCBI Taxonomy" id="360910"/>
    <lineage>
        <taxon>Bacteria</taxon>
        <taxon>Pseudomonadati</taxon>
        <taxon>Pseudomonadota</taxon>
        <taxon>Betaproteobacteria</taxon>
        <taxon>Burkholderiales</taxon>
        <taxon>Alcaligenaceae</taxon>
        <taxon>Bordetella</taxon>
    </lineage>
</organism>
<reference key="1">
    <citation type="journal article" date="2006" name="J. Bacteriol.">
        <title>Comparison of the genome sequence of the poultry pathogen Bordetella avium with those of B. bronchiseptica, B. pertussis, and B. parapertussis reveals extensive diversity in surface structures associated with host interaction.</title>
        <authorList>
            <person name="Sebaihia M."/>
            <person name="Preston A."/>
            <person name="Maskell D.J."/>
            <person name="Kuzmiak H."/>
            <person name="Connell T.D."/>
            <person name="King N.D."/>
            <person name="Orndorff P.E."/>
            <person name="Miyamoto D.M."/>
            <person name="Thomson N.R."/>
            <person name="Harris D."/>
            <person name="Goble A."/>
            <person name="Lord A."/>
            <person name="Murphy L."/>
            <person name="Quail M.A."/>
            <person name="Rutter S."/>
            <person name="Squares R."/>
            <person name="Squares S."/>
            <person name="Woodward J."/>
            <person name="Parkhill J."/>
            <person name="Temple L.M."/>
        </authorList>
    </citation>
    <scope>NUCLEOTIDE SEQUENCE [LARGE SCALE GENOMIC DNA]</scope>
    <source>
        <strain>197N</strain>
    </source>
</reference>
<accession>Q2KXU0</accession>
<name>FLUC_BORA1</name>
<dbReference type="EMBL" id="AM167904">
    <property type="protein sequence ID" value="CAJ50030.1"/>
    <property type="status" value="ALT_INIT"/>
    <property type="molecule type" value="Genomic_DNA"/>
</dbReference>
<dbReference type="RefSeq" id="WP_039052149.1">
    <property type="nucleotide sequence ID" value="NC_010645.1"/>
</dbReference>
<dbReference type="SMR" id="Q2KXU0"/>
<dbReference type="STRING" id="360910.BAV2420"/>
<dbReference type="GeneID" id="92934404"/>
<dbReference type="KEGG" id="bav:BAV2420"/>
<dbReference type="eggNOG" id="COG0239">
    <property type="taxonomic scope" value="Bacteria"/>
</dbReference>
<dbReference type="HOGENOM" id="CLU_114342_3_3_4"/>
<dbReference type="OrthoDB" id="9806299at2"/>
<dbReference type="Proteomes" id="UP000001977">
    <property type="component" value="Chromosome"/>
</dbReference>
<dbReference type="GO" id="GO:0005886">
    <property type="term" value="C:plasma membrane"/>
    <property type="evidence" value="ECO:0007669"/>
    <property type="project" value="UniProtKB-SubCell"/>
</dbReference>
<dbReference type="GO" id="GO:0062054">
    <property type="term" value="F:fluoride channel activity"/>
    <property type="evidence" value="ECO:0007669"/>
    <property type="project" value="UniProtKB-UniRule"/>
</dbReference>
<dbReference type="GO" id="GO:0046872">
    <property type="term" value="F:metal ion binding"/>
    <property type="evidence" value="ECO:0007669"/>
    <property type="project" value="UniProtKB-KW"/>
</dbReference>
<dbReference type="GO" id="GO:0140114">
    <property type="term" value="P:cellular detoxification of fluoride"/>
    <property type="evidence" value="ECO:0007669"/>
    <property type="project" value="UniProtKB-UniRule"/>
</dbReference>
<dbReference type="HAMAP" id="MF_00454">
    <property type="entry name" value="FluC"/>
    <property type="match status" value="1"/>
</dbReference>
<dbReference type="InterPro" id="IPR003691">
    <property type="entry name" value="FluC"/>
</dbReference>
<dbReference type="NCBIfam" id="TIGR00494">
    <property type="entry name" value="crcB"/>
    <property type="match status" value="1"/>
</dbReference>
<dbReference type="NCBIfam" id="NF010792">
    <property type="entry name" value="PRK14196.1"/>
    <property type="match status" value="1"/>
</dbReference>
<dbReference type="PANTHER" id="PTHR28259">
    <property type="entry name" value="FLUORIDE EXPORT PROTEIN 1-RELATED"/>
    <property type="match status" value="1"/>
</dbReference>
<dbReference type="PANTHER" id="PTHR28259:SF1">
    <property type="entry name" value="FLUORIDE EXPORT PROTEIN 1-RELATED"/>
    <property type="match status" value="1"/>
</dbReference>
<dbReference type="Pfam" id="PF02537">
    <property type="entry name" value="CRCB"/>
    <property type="match status" value="1"/>
</dbReference>
<comment type="function">
    <text evidence="1">Fluoride-specific ion channel. Important for reducing fluoride concentration in the cell, thus reducing its toxicity.</text>
</comment>
<comment type="catalytic activity">
    <reaction evidence="1">
        <text>fluoride(in) = fluoride(out)</text>
        <dbReference type="Rhea" id="RHEA:76159"/>
        <dbReference type="ChEBI" id="CHEBI:17051"/>
    </reaction>
    <physiologicalReaction direction="left-to-right" evidence="1">
        <dbReference type="Rhea" id="RHEA:76160"/>
    </physiologicalReaction>
</comment>
<comment type="activity regulation">
    <text evidence="1">Na(+) is not transported, but it plays an essential structural role and its presence is essential for fluoride channel function.</text>
</comment>
<comment type="subcellular location">
    <subcellularLocation>
        <location evidence="1">Cell inner membrane</location>
        <topology evidence="1">Multi-pass membrane protein</topology>
    </subcellularLocation>
</comment>
<comment type="similarity">
    <text evidence="1">Belongs to the fluoride channel Fluc/FEX (TC 1.A.43) family.</text>
</comment>
<comment type="sequence caution" evidence="2">
    <conflict type="erroneous initiation">
        <sequence resource="EMBL-CDS" id="CAJ50030"/>
    </conflict>
</comment>
<gene>
    <name evidence="1" type="primary">fluC</name>
    <name evidence="1" type="synonym">crcB</name>
    <name type="ordered locus">BAV2420</name>
</gene>
<protein>
    <recommendedName>
        <fullName evidence="1">Fluoride-specific ion channel FluC</fullName>
    </recommendedName>
</protein>
<proteinExistence type="inferred from homology"/>
<feature type="chain" id="PRO_0000252860" description="Fluoride-specific ion channel FluC">
    <location>
        <begin position="1"/>
        <end position="126"/>
    </location>
</feature>
<feature type="transmembrane region" description="Helical" evidence="1">
    <location>
        <begin position="5"/>
        <end position="25"/>
    </location>
</feature>
<feature type="transmembrane region" description="Helical" evidence="1">
    <location>
        <begin position="35"/>
        <end position="55"/>
    </location>
</feature>
<feature type="transmembrane region" description="Helical" evidence="1">
    <location>
        <begin position="68"/>
        <end position="88"/>
    </location>
</feature>
<feature type="transmembrane region" description="Helical" evidence="1">
    <location>
        <begin position="99"/>
        <end position="119"/>
    </location>
</feature>
<feature type="binding site" evidence="1">
    <location>
        <position position="75"/>
    </location>
    <ligand>
        <name>Na(+)</name>
        <dbReference type="ChEBI" id="CHEBI:29101"/>
        <note>structural</note>
    </ligand>
</feature>
<feature type="binding site" evidence="1">
    <location>
        <position position="78"/>
    </location>
    <ligand>
        <name>Na(+)</name>
        <dbReference type="ChEBI" id="CHEBI:29101"/>
        <note>structural</note>
    </ligand>
</feature>